<name>PMM_SOYBN</name>
<organism>
    <name type="scientific">Glycine max</name>
    <name type="common">Soybean</name>
    <name type="synonym">Glycine hispida</name>
    <dbReference type="NCBI Taxonomy" id="3847"/>
    <lineage>
        <taxon>Eukaryota</taxon>
        <taxon>Viridiplantae</taxon>
        <taxon>Streptophyta</taxon>
        <taxon>Embryophyta</taxon>
        <taxon>Tracheophyta</taxon>
        <taxon>Spermatophyta</taxon>
        <taxon>Magnoliopsida</taxon>
        <taxon>eudicotyledons</taxon>
        <taxon>Gunneridae</taxon>
        <taxon>Pentapetalae</taxon>
        <taxon>rosids</taxon>
        <taxon>fabids</taxon>
        <taxon>Fabales</taxon>
        <taxon>Fabaceae</taxon>
        <taxon>Papilionoideae</taxon>
        <taxon>50 kb inversion clade</taxon>
        <taxon>NPAAA clade</taxon>
        <taxon>indigoferoid/millettioid clade</taxon>
        <taxon>Phaseoleae</taxon>
        <taxon>Glycine</taxon>
        <taxon>Glycine subgen. Soja</taxon>
    </lineage>
</organism>
<reference key="1">
    <citation type="journal article" date="2007" name="Plant J.">
        <title>Molecular and functional analysis of phosphomannomutase (PMM) from higher plants and genetic evidence for the involvement of PMM in ascorbic acid biosynthesis in Arabidopsis and Nicotiana benthamiana.</title>
        <authorList>
            <person name="Qian W."/>
            <person name="Yu C."/>
            <person name="Qin H."/>
            <person name="Liu X."/>
            <person name="Zhang A."/>
            <person name="Johansen I.E."/>
            <person name="Wang D."/>
        </authorList>
    </citation>
    <scope>NUCLEOTIDE SEQUENCE [MRNA]</scope>
    <scope>FUNCTION</scope>
    <scope>CATALYTIC ACTIVITY</scope>
</reference>
<gene>
    <name evidence="5" type="primary">PMM</name>
</gene>
<sequence>MAARRPGLIALFDVDGTLTAPRKVVTPEMLTFMQELRKVVTVGVVGGSDLIKISEQLGSTVTNDYDYVFSENGLVAHKEGKLIGTQSLKSFLGEEKLKEFINFTLHYIADLDIPIKRGTFIEFRSGMLNVSPIGRNCSQEERDEFEKYDKVHNIRPKMVSVLREKFAHLNLTFSIGGQISFDVFPQGWDKTYCLRYLDGFNEIHFFGDKTYKGGNDHEIYESERTVGHTVTSPDDTVKQCKSLFLEN</sequence>
<accession>Q1W376</accession>
<feature type="chain" id="PRO_0000326495" description="Phosphomannomutase">
    <location>
        <begin position="1"/>
        <end position="247"/>
    </location>
</feature>
<feature type="active site" description="Nucleophile" evidence="3">
    <location>
        <position position="13"/>
    </location>
</feature>
<feature type="active site" description="Proton donor/acceptor" evidence="3">
    <location>
        <position position="15"/>
    </location>
</feature>
<feature type="binding site" evidence="3">
    <location>
        <position position="13"/>
    </location>
    <ligand>
        <name>Mg(2+)</name>
        <dbReference type="ChEBI" id="CHEBI:18420"/>
        <label>1</label>
    </ligand>
</feature>
<feature type="binding site" evidence="3">
    <location>
        <position position="15"/>
    </location>
    <ligand>
        <name>Mg(2+)</name>
        <dbReference type="ChEBI" id="CHEBI:18420"/>
        <label>1</label>
    </ligand>
</feature>
<feature type="binding site" evidence="3">
    <location>
        <position position="22"/>
    </location>
    <ligand>
        <name>alpha-D-mannose 1-phosphate</name>
        <dbReference type="ChEBI" id="CHEBI:58409"/>
    </ligand>
</feature>
<feature type="binding site" evidence="3">
    <location>
        <position position="124"/>
    </location>
    <ligand>
        <name>alpha-D-mannose 1-phosphate</name>
        <dbReference type="ChEBI" id="CHEBI:58409"/>
    </ligand>
</feature>
<feature type="binding site" evidence="3">
    <location>
        <position position="135"/>
    </location>
    <ligand>
        <name>alpha-D-mannose 1-phosphate</name>
        <dbReference type="ChEBI" id="CHEBI:58409"/>
    </ligand>
</feature>
<feature type="binding site" evidence="3">
    <location>
        <position position="142"/>
    </location>
    <ligand>
        <name>alpha-D-mannose 1-phosphate</name>
        <dbReference type="ChEBI" id="CHEBI:58409"/>
    </ligand>
</feature>
<feature type="binding site" evidence="3">
    <location>
        <position position="180"/>
    </location>
    <ligand>
        <name>alpha-D-mannose 1-phosphate</name>
        <dbReference type="ChEBI" id="CHEBI:58409"/>
    </ligand>
</feature>
<feature type="binding site" evidence="3">
    <location>
        <position position="182"/>
    </location>
    <ligand>
        <name>alpha-D-mannose 1-phosphate</name>
        <dbReference type="ChEBI" id="CHEBI:58409"/>
    </ligand>
</feature>
<feature type="binding site" evidence="2">
    <location>
        <position position="208"/>
    </location>
    <ligand>
        <name>Mg(2+)</name>
        <dbReference type="ChEBI" id="CHEBI:18420"/>
        <label>1</label>
    </ligand>
</feature>
<feature type="binding site" evidence="2">
    <location>
        <position position="220"/>
    </location>
    <ligand>
        <name>Mg(2+)</name>
        <dbReference type="ChEBI" id="CHEBI:18420"/>
        <label>2</label>
    </ligand>
</feature>
<feature type="binding site" evidence="3">
    <location>
        <position position="225"/>
    </location>
    <ligand>
        <name>Mg(2+)</name>
        <dbReference type="ChEBI" id="CHEBI:18420"/>
        <label>2</label>
    </ligand>
</feature>
<proteinExistence type="evidence at protein level"/>
<keyword id="KW-0963">Cytoplasm</keyword>
<keyword id="KW-0413">Isomerase</keyword>
<keyword id="KW-0460">Magnesium</keyword>
<keyword id="KW-0479">Metal-binding</keyword>
<keyword id="KW-1185">Reference proteome</keyword>
<comment type="function">
    <text evidence="4 6 7">Catalyzes the interconversion of mannose-6-phosphate to mannose-1-phosphate, the precursor for the synthesis of GDP-mannose (Probable). GDP-mannose is an essential sugar nucleotide for the synthesis of D-mannose-containing cell wall polysaccharides (galactomannans and glucomannans), glycolipids, glycoproteins and the antioxidant L-ascorbate (Probable). Can complement the yeast temperature-sensitive mutant sec53-6 (PubMed:17217471).</text>
</comment>
<comment type="catalytic activity">
    <reaction evidence="7">
        <text>alpha-D-mannose 1-phosphate = D-mannose 6-phosphate</text>
        <dbReference type="Rhea" id="RHEA:11140"/>
        <dbReference type="ChEBI" id="CHEBI:58409"/>
        <dbReference type="ChEBI" id="CHEBI:58735"/>
        <dbReference type="EC" id="5.4.2.8"/>
    </reaction>
</comment>
<comment type="cofactor">
    <cofactor evidence="3">
        <name>Mg(2+)</name>
        <dbReference type="ChEBI" id="CHEBI:18420"/>
    </cofactor>
</comment>
<comment type="pathway">
    <text evidence="6">Nucleotide-sugar biosynthesis; GDP-alpha-D-mannose biosynthesis; alpha-D-mannose 1-phosphate from D-fructose 6-phosphate: step 2/2.</text>
</comment>
<comment type="subunit">
    <text evidence="3">Homodimer.</text>
</comment>
<comment type="subcellular location">
    <subcellularLocation>
        <location evidence="1">Cytoplasm</location>
    </subcellularLocation>
</comment>
<comment type="similarity">
    <text evidence="6">Belongs to the eukaryotic PMM family.</text>
</comment>
<protein>
    <recommendedName>
        <fullName evidence="5">Phosphomannomutase</fullName>
        <shortName evidence="5">GmPMM</shortName>
        <ecNumber evidence="7">5.4.2.8</ecNumber>
    </recommendedName>
</protein>
<evidence type="ECO:0000250" key="1">
    <source>
        <dbReference type="UniProtKB" id="A0A0U1WZ18"/>
    </source>
</evidence>
<evidence type="ECO:0000250" key="2">
    <source>
        <dbReference type="UniProtKB" id="P31353"/>
    </source>
</evidence>
<evidence type="ECO:0000250" key="3">
    <source>
        <dbReference type="UniProtKB" id="Q92871"/>
    </source>
</evidence>
<evidence type="ECO:0000269" key="4">
    <source>
    </source>
</evidence>
<evidence type="ECO:0000303" key="5">
    <source>
    </source>
</evidence>
<evidence type="ECO:0000305" key="6"/>
<evidence type="ECO:0000305" key="7">
    <source>
    </source>
</evidence>
<dbReference type="EC" id="5.4.2.8" evidence="7"/>
<dbReference type="EMBL" id="DQ442994">
    <property type="protein sequence ID" value="ABD97873.1"/>
    <property type="molecule type" value="mRNA"/>
</dbReference>
<dbReference type="RefSeq" id="NP_001237668.1">
    <property type="nucleotide sequence ID" value="NM_001250739.1"/>
</dbReference>
<dbReference type="RefSeq" id="XP_006601866.1">
    <property type="nucleotide sequence ID" value="XM_006601803.4"/>
</dbReference>
<dbReference type="SMR" id="Q1W376"/>
<dbReference type="FunCoup" id="Q1W376">
    <property type="interactions" value="6065"/>
</dbReference>
<dbReference type="STRING" id="3847.Q1W376"/>
<dbReference type="PaxDb" id="3847-GLYMA18G46390.1"/>
<dbReference type="EnsemblPlants" id="KRH00697">
    <property type="protein sequence ID" value="KRH00697"/>
    <property type="gene ID" value="GLYMA_18G229800"/>
</dbReference>
<dbReference type="GeneID" id="732605"/>
<dbReference type="Gramene" id="KRH00697">
    <property type="protein sequence ID" value="KRH00697"/>
    <property type="gene ID" value="GLYMA_18G229800"/>
</dbReference>
<dbReference type="KEGG" id="gmx:732605"/>
<dbReference type="eggNOG" id="KOG3189">
    <property type="taxonomic scope" value="Eukaryota"/>
</dbReference>
<dbReference type="HOGENOM" id="CLU_065642_0_1_1"/>
<dbReference type="InParanoid" id="Q1W376"/>
<dbReference type="OMA" id="ISHRVYT"/>
<dbReference type="OrthoDB" id="10264771at2759"/>
<dbReference type="UniPathway" id="UPA00126">
    <property type="reaction ID" value="UER00424"/>
</dbReference>
<dbReference type="Proteomes" id="UP000008827">
    <property type="component" value="Chromosome 18"/>
</dbReference>
<dbReference type="GO" id="GO:0005829">
    <property type="term" value="C:cytosol"/>
    <property type="evidence" value="ECO:0000318"/>
    <property type="project" value="GO_Central"/>
</dbReference>
<dbReference type="GO" id="GO:0046872">
    <property type="term" value="F:metal ion binding"/>
    <property type="evidence" value="ECO:0007669"/>
    <property type="project" value="UniProtKB-KW"/>
</dbReference>
<dbReference type="GO" id="GO:0004615">
    <property type="term" value="F:phosphomannomutase activity"/>
    <property type="evidence" value="ECO:0000318"/>
    <property type="project" value="GO_Central"/>
</dbReference>
<dbReference type="GO" id="GO:0009298">
    <property type="term" value="P:GDP-mannose biosynthetic process"/>
    <property type="evidence" value="ECO:0007669"/>
    <property type="project" value="UniProtKB-UniPathway"/>
</dbReference>
<dbReference type="GO" id="GO:0006013">
    <property type="term" value="P:mannose metabolic process"/>
    <property type="evidence" value="ECO:0000318"/>
    <property type="project" value="GO_Central"/>
</dbReference>
<dbReference type="GO" id="GO:0006487">
    <property type="term" value="P:protein N-linked glycosylation"/>
    <property type="evidence" value="ECO:0000318"/>
    <property type="project" value="GO_Central"/>
</dbReference>
<dbReference type="CDD" id="cd02585">
    <property type="entry name" value="HAD_PMM"/>
    <property type="match status" value="1"/>
</dbReference>
<dbReference type="FunFam" id="3.30.1240.20:FF:000001">
    <property type="entry name" value="Phosphomannomutase"/>
    <property type="match status" value="1"/>
</dbReference>
<dbReference type="Gene3D" id="3.30.1240.20">
    <property type="match status" value="1"/>
</dbReference>
<dbReference type="Gene3D" id="3.40.50.1000">
    <property type="entry name" value="HAD superfamily/HAD-like"/>
    <property type="match status" value="1"/>
</dbReference>
<dbReference type="InterPro" id="IPR036412">
    <property type="entry name" value="HAD-like_sf"/>
</dbReference>
<dbReference type="InterPro" id="IPR006379">
    <property type="entry name" value="HAD-SF_hydro_IIB"/>
</dbReference>
<dbReference type="InterPro" id="IPR023214">
    <property type="entry name" value="HAD_sf"/>
</dbReference>
<dbReference type="InterPro" id="IPR005002">
    <property type="entry name" value="PMM"/>
</dbReference>
<dbReference type="InterPro" id="IPR043169">
    <property type="entry name" value="PMM_cap"/>
</dbReference>
<dbReference type="NCBIfam" id="TIGR01484">
    <property type="entry name" value="HAD-SF-IIB"/>
    <property type="match status" value="1"/>
</dbReference>
<dbReference type="PANTHER" id="PTHR10466">
    <property type="entry name" value="PHOSPHOMANNOMUTASE"/>
    <property type="match status" value="1"/>
</dbReference>
<dbReference type="PANTHER" id="PTHR10466:SF0">
    <property type="entry name" value="PHOSPHOMANNOMUTASE"/>
    <property type="match status" value="1"/>
</dbReference>
<dbReference type="Pfam" id="PF03332">
    <property type="entry name" value="PMM"/>
    <property type="match status" value="1"/>
</dbReference>
<dbReference type="SFLD" id="SFLDF00445">
    <property type="entry name" value="alpha-phosphomannomutase"/>
    <property type="match status" value="1"/>
</dbReference>
<dbReference type="SFLD" id="SFLDG01140">
    <property type="entry name" value="C2.B:_Phosphomannomutase_and_P"/>
    <property type="match status" value="1"/>
</dbReference>
<dbReference type="SUPFAM" id="SSF56784">
    <property type="entry name" value="HAD-like"/>
    <property type="match status" value="1"/>
</dbReference>